<reference key="1">
    <citation type="journal article" date="2007" name="ISME J.">
        <title>Population level functional diversity in a microbial community revealed by comparative genomic and metagenomic analyses.</title>
        <authorList>
            <person name="Bhaya D."/>
            <person name="Grossman A.R."/>
            <person name="Steunou A.-S."/>
            <person name="Khuri N."/>
            <person name="Cohan F.M."/>
            <person name="Hamamura N."/>
            <person name="Melendrez M.C."/>
            <person name="Bateson M.M."/>
            <person name="Ward D.M."/>
            <person name="Heidelberg J.F."/>
        </authorList>
    </citation>
    <scope>NUCLEOTIDE SEQUENCE [LARGE SCALE GENOMIC DNA]</scope>
    <source>
        <strain>JA-3-3Ab</strain>
    </source>
</reference>
<gene>
    <name evidence="1" type="primary">rplK</name>
    <name evidence="1" type="synonym">rpl11</name>
    <name type="ordered locus">CYA_1779</name>
</gene>
<organism>
    <name type="scientific">Synechococcus sp. (strain JA-3-3Ab)</name>
    <name type="common">Cyanobacteria bacterium Yellowstone A-Prime</name>
    <dbReference type="NCBI Taxonomy" id="321327"/>
    <lineage>
        <taxon>Bacteria</taxon>
        <taxon>Bacillati</taxon>
        <taxon>Cyanobacteriota</taxon>
        <taxon>Cyanophyceae</taxon>
        <taxon>Synechococcales</taxon>
        <taxon>Synechococcaceae</taxon>
        <taxon>Synechococcus</taxon>
    </lineage>
</organism>
<evidence type="ECO:0000255" key="1">
    <source>
        <dbReference type="HAMAP-Rule" id="MF_00736"/>
    </source>
</evidence>
<evidence type="ECO:0000305" key="2"/>
<keyword id="KW-0488">Methylation</keyword>
<keyword id="KW-0687">Ribonucleoprotein</keyword>
<keyword id="KW-0689">Ribosomal protein</keyword>
<keyword id="KW-0694">RNA-binding</keyword>
<keyword id="KW-0699">rRNA-binding</keyword>
<feature type="chain" id="PRO_0000258231" description="Large ribosomal subunit protein uL11">
    <location>
        <begin position="1"/>
        <end position="141"/>
    </location>
</feature>
<comment type="function">
    <text evidence="1">Forms part of the ribosomal stalk which helps the ribosome interact with GTP-bound translation factors.</text>
</comment>
<comment type="subunit">
    <text evidence="1">Part of the ribosomal stalk of the 50S ribosomal subunit. Interacts with L10 and the large rRNA to form the base of the stalk. L10 forms an elongated spine to which L12 dimers bind in a sequential fashion forming a multimeric L10(L12)X complex.</text>
</comment>
<comment type="PTM">
    <text evidence="1">One or more lysine residues are methylated.</text>
</comment>
<comment type="similarity">
    <text evidence="1">Belongs to the universal ribosomal protein uL11 family.</text>
</comment>
<dbReference type="EMBL" id="CP000239">
    <property type="protein sequence ID" value="ABC99933.1"/>
    <property type="molecule type" value="Genomic_DNA"/>
</dbReference>
<dbReference type="RefSeq" id="WP_011430609.1">
    <property type="nucleotide sequence ID" value="NC_007775.1"/>
</dbReference>
<dbReference type="SMR" id="Q2JTQ6"/>
<dbReference type="STRING" id="321327.CYA_1779"/>
<dbReference type="KEGG" id="cya:CYA_1779"/>
<dbReference type="eggNOG" id="COG0080">
    <property type="taxonomic scope" value="Bacteria"/>
</dbReference>
<dbReference type="HOGENOM" id="CLU_074237_2_1_3"/>
<dbReference type="OrthoDB" id="9802408at2"/>
<dbReference type="Proteomes" id="UP000008818">
    <property type="component" value="Chromosome"/>
</dbReference>
<dbReference type="GO" id="GO:0022625">
    <property type="term" value="C:cytosolic large ribosomal subunit"/>
    <property type="evidence" value="ECO:0007669"/>
    <property type="project" value="TreeGrafter"/>
</dbReference>
<dbReference type="GO" id="GO:0070180">
    <property type="term" value="F:large ribosomal subunit rRNA binding"/>
    <property type="evidence" value="ECO:0007669"/>
    <property type="project" value="UniProtKB-UniRule"/>
</dbReference>
<dbReference type="GO" id="GO:0003735">
    <property type="term" value="F:structural constituent of ribosome"/>
    <property type="evidence" value="ECO:0007669"/>
    <property type="project" value="InterPro"/>
</dbReference>
<dbReference type="GO" id="GO:0006412">
    <property type="term" value="P:translation"/>
    <property type="evidence" value="ECO:0007669"/>
    <property type="project" value="UniProtKB-UniRule"/>
</dbReference>
<dbReference type="CDD" id="cd00349">
    <property type="entry name" value="Ribosomal_L11"/>
    <property type="match status" value="1"/>
</dbReference>
<dbReference type="FunFam" id="1.10.10.250:FF:000001">
    <property type="entry name" value="50S ribosomal protein L11"/>
    <property type="match status" value="1"/>
</dbReference>
<dbReference type="FunFam" id="3.30.1550.10:FF:000001">
    <property type="entry name" value="50S ribosomal protein L11"/>
    <property type="match status" value="1"/>
</dbReference>
<dbReference type="Gene3D" id="1.10.10.250">
    <property type="entry name" value="Ribosomal protein L11, C-terminal domain"/>
    <property type="match status" value="1"/>
</dbReference>
<dbReference type="Gene3D" id="3.30.1550.10">
    <property type="entry name" value="Ribosomal protein L11/L12, N-terminal domain"/>
    <property type="match status" value="1"/>
</dbReference>
<dbReference type="HAMAP" id="MF_00736">
    <property type="entry name" value="Ribosomal_uL11"/>
    <property type="match status" value="1"/>
</dbReference>
<dbReference type="InterPro" id="IPR000911">
    <property type="entry name" value="Ribosomal_uL11"/>
</dbReference>
<dbReference type="InterPro" id="IPR006519">
    <property type="entry name" value="Ribosomal_uL11_bac-typ"/>
</dbReference>
<dbReference type="InterPro" id="IPR020783">
    <property type="entry name" value="Ribosomal_uL11_C"/>
</dbReference>
<dbReference type="InterPro" id="IPR036769">
    <property type="entry name" value="Ribosomal_uL11_C_sf"/>
</dbReference>
<dbReference type="InterPro" id="IPR020785">
    <property type="entry name" value="Ribosomal_uL11_CS"/>
</dbReference>
<dbReference type="InterPro" id="IPR020784">
    <property type="entry name" value="Ribosomal_uL11_N"/>
</dbReference>
<dbReference type="InterPro" id="IPR036796">
    <property type="entry name" value="Ribosomal_uL11_N_sf"/>
</dbReference>
<dbReference type="NCBIfam" id="TIGR01632">
    <property type="entry name" value="L11_bact"/>
    <property type="match status" value="1"/>
</dbReference>
<dbReference type="PANTHER" id="PTHR11661">
    <property type="entry name" value="60S RIBOSOMAL PROTEIN L12"/>
    <property type="match status" value="1"/>
</dbReference>
<dbReference type="PANTHER" id="PTHR11661:SF1">
    <property type="entry name" value="LARGE RIBOSOMAL SUBUNIT PROTEIN UL11M"/>
    <property type="match status" value="1"/>
</dbReference>
<dbReference type="Pfam" id="PF00298">
    <property type="entry name" value="Ribosomal_L11"/>
    <property type="match status" value="1"/>
</dbReference>
<dbReference type="Pfam" id="PF03946">
    <property type="entry name" value="Ribosomal_L11_N"/>
    <property type="match status" value="1"/>
</dbReference>
<dbReference type="SMART" id="SM00649">
    <property type="entry name" value="RL11"/>
    <property type="match status" value="1"/>
</dbReference>
<dbReference type="SUPFAM" id="SSF54747">
    <property type="entry name" value="Ribosomal L11/L12e N-terminal domain"/>
    <property type="match status" value="1"/>
</dbReference>
<dbReference type="SUPFAM" id="SSF46906">
    <property type="entry name" value="Ribosomal protein L11, C-terminal domain"/>
    <property type="match status" value="1"/>
</dbReference>
<dbReference type="PROSITE" id="PS00359">
    <property type="entry name" value="RIBOSOMAL_L11"/>
    <property type="match status" value="1"/>
</dbReference>
<protein>
    <recommendedName>
        <fullName evidence="1">Large ribosomal subunit protein uL11</fullName>
    </recommendedName>
    <alternativeName>
        <fullName evidence="2">50S ribosomal protein L11</fullName>
    </alternativeName>
</protein>
<proteinExistence type="inferred from homology"/>
<sequence length="141" mass="14892">MAKKLVAVVKLAIQAGKATPAPPIGPALGQHGVNIMAFCKEYNAKTADQAGMVVPVEISIYEDRSFTFVLKTPPASVLIKKALGIESGSSEPHKVKVGSLTRAQLRQIAEQKLPDLNARDVEAAMKIIAGTARSMGVTIVD</sequence>
<accession>Q2JTQ6</accession>
<name>RL11_SYNJA</name>